<sequence>MTRVALTSAVNLAKKLHDAGIRNQAVLKAISHTPREMFLDNALAHKAYENTALPIGQGQTISQPYIVARMTELLLHKMPQRVLEVGTGSGYQAAILAQLVPQLCTIERIKGLQIQARQRLKRLDLHNVSFKYGDGWLGWANRSPFDAIMVTAAASTIPEALLSQLAEGGVLVLPVGEDTQQLMRITRTADRFSSETIETVKFVPLINGELA</sequence>
<reference key="1">
    <citation type="submission" date="2007-07" db="EMBL/GenBank/DDBJ databases">
        <title>Complete sequence of chromosome of Shewanella baltica OS185.</title>
        <authorList>
            <consortium name="US DOE Joint Genome Institute"/>
            <person name="Copeland A."/>
            <person name="Lucas S."/>
            <person name="Lapidus A."/>
            <person name="Barry K."/>
            <person name="Glavina del Rio T."/>
            <person name="Dalin E."/>
            <person name="Tice H."/>
            <person name="Pitluck S."/>
            <person name="Sims D."/>
            <person name="Brettin T."/>
            <person name="Bruce D."/>
            <person name="Detter J.C."/>
            <person name="Han C."/>
            <person name="Schmutz J."/>
            <person name="Larimer F."/>
            <person name="Land M."/>
            <person name="Hauser L."/>
            <person name="Kyrpides N."/>
            <person name="Mikhailova N."/>
            <person name="Brettar I."/>
            <person name="Rodrigues J."/>
            <person name="Konstantinidis K."/>
            <person name="Tiedje J."/>
            <person name="Richardson P."/>
        </authorList>
    </citation>
    <scope>NUCLEOTIDE SEQUENCE [LARGE SCALE GENOMIC DNA]</scope>
    <source>
        <strain>OS185</strain>
    </source>
</reference>
<name>PIMT_SHEB8</name>
<protein>
    <recommendedName>
        <fullName evidence="1">Protein-L-isoaspartate O-methyltransferase</fullName>
        <ecNumber evidence="1">2.1.1.77</ecNumber>
    </recommendedName>
    <alternativeName>
        <fullName evidence="1">L-isoaspartyl protein carboxyl methyltransferase</fullName>
    </alternativeName>
    <alternativeName>
        <fullName evidence="1">Protein L-isoaspartyl methyltransferase</fullName>
    </alternativeName>
    <alternativeName>
        <fullName evidence="1">Protein-beta-aspartate methyltransferase</fullName>
        <shortName evidence="1">PIMT</shortName>
    </alternativeName>
</protein>
<keyword id="KW-0963">Cytoplasm</keyword>
<keyword id="KW-0489">Methyltransferase</keyword>
<keyword id="KW-0949">S-adenosyl-L-methionine</keyword>
<keyword id="KW-0808">Transferase</keyword>
<comment type="function">
    <text evidence="1">Catalyzes the methyl esterification of L-isoaspartyl residues in peptides and proteins that result from spontaneous decomposition of normal L-aspartyl and L-asparaginyl residues. It plays a role in the repair and/or degradation of damaged proteins.</text>
</comment>
<comment type="catalytic activity">
    <reaction evidence="1">
        <text>[protein]-L-isoaspartate + S-adenosyl-L-methionine = [protein]-L-isoaspartate alpha-methyl ester + S-adenosyl-L-homocysteine</text>
        <dbReference type="Rhea" id="RHEA:12705"/>
        <dbReference type="Rhea" id="RHEA-COMP:12143"/>
        <dbReference type="Rhea" id="RHEA-COMP:12144"/>
        <dbReference type="ChEBI" id="CHEBI:57856"/>
        <dbReference type="ChEBI" id="CHEBI:59789"/>
        <dbReference type="ChEBI" id="CHEBI:90596"/>
        <dbReference type="ChEBI" id="CHEBI:90598"/>
        <dbReference type="EC" id="2.1.1.77"/>
    </reaction>
</comment>
<comment type="subcellular location">
    <subcellularLocation>
        <location evidence="1">Cytoplasm</location>
    </subcellularLocation>
</comment>
<comment type="similarity">
    <text evidence="1">Belongs to the methyltransferase superfamily. L-isoaspartyl/D-aspartyl protein methyltransferase family.</text>
</comment>
<evidence type="ECO:0000255" key="1">
    <source>
        <dbReference type="HAMAP-Rule" id="MF_00090"/>
    </source>
</evidence>
<organism>
    <name type="scientific">Shewanella baltica (strain OS185)</name>
    <dbReference type="NCBI Taxonomy" id="402882"/>
    <lineage>
        <taxon>Bacteria</taxon>
        <taxon>Pseudomonadati</taxon>
        <taxon>Pseudomonadota</taxon>
        <taxon>Gammaproteobacteria</taxon>
        <taxon>Alteromonadales</taxon>
        <taxon>Shewanellaceae</taxon>
        <taxon>Shewanella</taxon>
    </lineage>
</organism>
<gene>
    <name evidence="1" type="primary">pcm</name>
    <name type="ordered locus">Shew185_3130</name>
</gene>
<dbReference type="EC" id="2.1.1.77" evidence="1"/>
<dbReference type="EMBL" id="CP000753">
    <property type="protein sequence ID" value="ABS09261.1"/>
    <property type="molecule type" value="Genomic_DNA"/>
</dbReference>
<dbReference type="RefSeq" id="WP_006082610.1">
    <property type="nucleotide sequence ID" value="NC_009665.1"/>
</dbReference>
<dbReference type="SMR" id="A6WR22"/>
<dbReference type="KEGG" id="sbm:Shew185_3130"/>
<dbReference type="HOGENOM" id="CLU_055432_2_0_6"/>
<dbReference type="GO" id="GO:0005737">
    <property type="term" value="C:cytoplasm"/>
    <property type="evidence" value="ECO:0007669"/>
    <property type="project" value="UniProtKB-SubCell"/>
</dbReference>
<dbReference type="GO" id="GO:0004719">
    <property type="term" value="F:protein-L-isoaspartate (D-aspartate) O-methyltransferase activity"/>
    <property type="evidence" value="ECO:0007669"/>
    <property type="project" value="UniProtKB-UniRule"/>
</dbReference>
<dbReference type="GO" id="GO:0032259">
    <property type="term" value="P:methylation"/>
    <property type="evidence" value="ECO:0007669"/>
    <property type="project" value="UniProtKB-KW"/>
</dbReference>
<dbReference type="GO" id="GO:0036211">
    <property type="term" value="P:protein modification process"/>
    <property type="evidence" value="ECO:0007669"/>
    <property type="project" value="UniProtKB-UniRule"/>
</dbReference>
<dbReference type="GO" id="GO:0030091">
    <property type="term" value="P:protein repair"/>
    <property type="evidence" value="ECO:0007669"/>
    <property type="project" value="UniProtKB-UniRule"/>
</dbReference>
<dbReference type="CDD" id="cd02440">
    <property type="entry name" value="AdoMet_MTases"/>
    <property type="match status" value="1"/>
</dbReference>
<dbReference type="FunFam" id="3.40.50.150:FF:000010">
    <property type="entry name" value="Protein-L-isoaspartate O-methyltransferase"/>
    <property type="match status" value="1"/>
</dbReference>
<dbReference type="Gene3D" id="3.40.50.150">
    <property type="entry name" value="Vaccinia Virus protein VP39"/>
    <property type="match status" value="1"/>
</dbReference>
<dbReference type="HAMAP" id="MF_00090">
    <property type="entry name" value="PIMT"/>
    <property type="match status" value="1"/>
</dbReference>
<dbReference type="InterPro" id="IPR000682">
    <property type="entry name" value="PCMT"/>
</dbReference>
<dbReference type="InterPro" id="IPR029063">
    <property type="entry name" value="SAM-dependent_MTases_sf"/>
</dbReference>
<dbReference type="NCBIfam" id="TIGR00080">
    <property type="entry name" value="pimt"/>
    <property type="match status" value="1"/>
</dbReference>
<dbReference type="NCBIfam" id="NF001453">
    <property type="entry name" value="PRK00312.1"/>
    <property type="match status" value="1"/>
</dbReference>
<dbReference type="PANTHER" id="PTHR11579">
    <property type="entry name" value="PROTEIN-L-ISOASPARTATE O-METHYLTRANSFERASE"/>
    <property type="match status" value="1"/>
</dbReference>
<dbReference type="PANTHER" id="PTHR11579:SF0">
    <property type="entry name" value="PROTEIN-L-ISOASPARTATE(D-ASPARTATE) O-METHYLTRANSFERASE"/>
    <property type="match status" value="1"/>
</dbReference>
<dbReference type="Pfam" id="PF01135">
    <property type="entry name" value="PCMT"/>
    <property type="match status" value="1"/>
</dbReference>
<dbReference type="SUPFAM" id="SSF53335">
    <property type="entry name" value="S-adenosyl-L-methionine-dependent methyltransferases"/>
    <property type="match status" value="1"/>
</dbReference>
<dbReference type="PROSITE" id="PS01279">
    <property type="entry name" value="PCMT"/>
    <property type="match status" value="1"/>
</dbReference>
<proteinExistence type="inferred from homology"/>
<feature type="chain" id="PRO_1000093281" description="Protein-L-isoaspartate O-methyltransferase">
    <location>
        <begin position="1"/>
        <end position="211"/>
    </location>
</feature>
<feature type="active site" evidence="1">
    <location>
        <position position="62"/>
    </location>
</feature>
<accession>A6WR22</accession>